<accession>A4TRJ6</accession>
<name>OBG_YERPP</name>
<sequence>MKFVDEAAILVVAGDGGNGCVSFRREKYIPNGGPDGGDGGDGGDIYLLADENLNTLIDYRFVKSFRAERGQNGQSRDCTGKRGKDITIKVPVGTRVLDQGTGEIVGDMVRHGQRLMVAKGGFHGLGNSRFKSSVNRAPRQKTMGTEGETRELMLELLLLADVGMLGLPNAGKSTFIRAVSAAKPKVADYPFTTLIPSLGVVRMDYEQSFVIADIPGLIEGASDGAGLGIRFLKHLERCRVLLHLVDLAPIDESDPAENAKVIVNELQQYSENLAEKPRWLVFNKIDLIDPEEAEKRAKAIVETLGWEGKYYMISAANRDNVNALCWDVMSFLNSQPKAMAIAESVPEKVEFMWDDYHREQLAEVEAEAEDDWDDDWDEEDDDGVEIIYER</sequence>
<evidence type="ECO:0000255" key="1">
    <source>
        <dbReference type="HAMAP-Rule" id="MF_01454"/>
    </source>
</evidence>
<evidence type="ECO:0000255" key="2">
    <source>
        <dbReference type="PROSITE-ProRule" id="PRU01231"/>
    </source>
</evidence>
<evidence type="ECO:0000256" key="3">
    <source>
        <dbReference type="SAM" id="MobiDB-lite"/>
    </source>
</evidence>
<protein>
    <recommendedName>
        <fullName evidence="1">GTPase Obg</fullName>
        <ecNumber evidence="1">3.6.5.-</ecNumber>
    </recommendedName>
    <alternativeName>
        <fullName evidence="1">GTP-binding protein Obg</fullName>
    </alternativeName>
</protein>
<dbReference type="EC" id="3.6.5.-" evidence="1"/>
<dbReference type="EMBL" id="CP000668">
    <property type="protein sequence ID" value="ABP41908.1"/>
    <property type="molecule type" value="Genomic_DNA"/>
</dbReference>
<dbReference type="SMR" id="A4TRJ6"/>
<dbReference type="KEGG" id="ypp:YPDSF_3558"/>
<dbReference type="PATRIC" id="fig|386656.14.peg.214"/>
<dbReference type="GO" id="GO:0005737">
    <property type="term" value="C:cytoplasm"/>
    <property type="evidence" value="ECO:0007669"/>
    <property type="project" value="UniProtKB-SubCell"/>
</dbReference>
<dbReference type="GO" id="GO:0005525">
    <property type="term" value="F:GTP binding"/>
    <property type="evidence" value="ECO:0007669"/>
    <property type="project" value="UniProtKB-UniRule"/>
</dbReference>
<dbReference type="GO" id="GO:0003924">
    <property type="term" value="F:GTPase activity"/>
    <property type="evidence" value="ECO:0007669"/>
    <property type="project" value="UniProtKB-UniRule"/>
</dbReference>
<dbReference type="GO" id="GO:0000287">
    <property type="term" value="F:magnesium ion binding"/>
    <property type="evidence" value="ECO:0007669"/>
    <property type="project" value="InterPro"/>
</dbReference>
<dbReference type="GO" id="GO:0042254">
    <property type="term" value="P:ribosome biogenesis"/>
    <property type="evidence" value="ECO:0007669"/>
    <property type="project" value="UniProtKB-UniRule"/>
</dbReference>
<dbReference type="CDD" id="cd01898">
    <property type="entry name" value="Obg"/>
    <property type="match status" value="1"/>
</dbReference>
<dbReference type="FunFam" id="2.70.210.12:FF:000001">
    <property type="entry name" value="GTPase Obg"/>
    <property type="match status" value="1"/>
</dbReference>
<dbReference type="FunFam" id="3.40.50.300:FF:000185">
    <property type="entry name" value="GTPase Obg"/>
    <property type="match status" value="1"/>
</dbReference>
<dbReference type="Gene3D" id="2.70.210.12">
    <property type="entry name" value="GTP1/OBG domain"/>
    <property type="match status" value="1"/>
</dbReference>
<dbReference type="Gene3D" id="3.40.50.300">
    <property type="entry name" value="P-loop containing nucleotide triphosphate hydrolases"/>
    <property type="match status" value="1"/>
</dbReference>
<dbReference type="HAMAP" id="MF_01454">
    <property type="entry name" value="GTPase_Obg"/>
    <property type="match status" value="1"/>
</dbReference>
<dbReference type="InterPro" id="IPR031167">
    <property type="entry name" value="G_OBG"/>
</dbReference>
<dbReference type="InterPro" id="IPR006073">
    <property type="entry name" value="GTP-bd"/>
</dbReference>
<dbReference type="InterPro" id="IPR014100">
    <property type="entry name" value="GTP-bd_Obg/CgtA"/>
</dbReference>
<dbReference type="InterPro" id="IPR006074">
    <property type="entry name" value="GTP1-OBG_CS"/>
</dbReference>
<dbReference type="InterPro" id="IPR006169">
    <property type="entry name" value="GTP1_OBG_dom"/>
</dbReference>
<dbReference type="InterPro" id="IPR036726">
    <property type="entry name" value="GTP1_OBG_dom_sf"/>
</dbReference>
<dbReference type="InterPro" id="IPR045086">
    <property type="entry name" value="OBG_GTPase"/>
</dbReference>
<dbReference type="InterPro" id="IPR027417">
    <property type="entry name" value="P-loop_NTPase"/>
</dbReference>
<dbReference type="NCBIfam" id="TIGR02729">
    <property type="entry name" value="Obg_CgtA"/>
    <property type="match status" value="1"/>
</dbReference>
<dbReference type="NCBIfam" id="NF008955">
    <property type="entry name" value="PRK12297.1"/>
    <property type="match status" value="1"/>
</dbReference>
<dbReference type="NCBIfam" id="NF008956">
    <property type="entry name" value="PRK12299.1"/>
    <property type="match status" value="1"/>
</dbReference>
<dbReference type="PANTHER" id="PTHR11702">
    <property type="entry name" value="DEVELOPMENTALLY REGULATED GTP-BINDING PROTEIN-RELATED"/>
    <property type="match status" value="1"/>
</dbReference>
<dbReference type="PANTHER" id="PTHR11702:SF31">
    <property type="entry name" value="MITOCHONDRIAL RIBOSOME-ASSOCIATED GTPASE 2"/>
    <property type="match status" value="1"/>
</dbReference>
<dbReference type="Pfam" id="PF01018">
    <property type="entry name" value="GTP1_OBG"/>
    <property type="match status" value="1"/>
</dbReference>
<dbReference type="Pfam" id="PF01926">
    <property type="entry name" value="MMR_HSR1"/>
    <property type="match status" value="1"/>
</dbReference>
<dbReference type="PIRSF" id="PIRSF002401">
    <property type="entry name" value="GTP_bd_Obg/CgtA"/>
    <property type="match status" value="1"/>
</dbReference>
<dbReference type="PRINTS" id="PR00326">
    <property type="entry name" value="GTP1OBG"/>
</dbReference>
<dbReference type="SUPFAM" id="SSF82051">
    <property type="entry name" value="Obg GTP-binding protein N-terminal domain"/>
    <property type="match status" value="1"/>
</dbReference>
<dbReference type="SUPFAM" id="SSF52540">
    <property type="entry name" value="P-loop containing nucleoside triphosphate hydrolases"/>
    <property type="match status" value="1"/>
</dbReference>
<dbReference type="PROSITE" id="PS51710">
    <property type="entry name" value="G_OBG"/>
    <property type="match status" value="1"/>
</dbReference>
<dbReference type="PROSITE" id="PS00905">
    <property type="entry name" value="GTP1_OBG"/>
    <property type="match status" value="1"/>
</dbReference>
<dbReference type="PROSITE" id="PS51883">
    <property type="entry name" value="OBG"/>
    <property type="match status" value="1"/>
</dbReference>
<comment type="function">
    <text evidence="1">An essential GTPase which binds GTP, GDP and possibly (p)ppGpp with moderate affinity, with high nucleotide exchange rates and a fairly low GTP hydrolysis rate. Plays a role in control of the cell cycle, stress response, ribosome biogenesis and in those bacteria that undergo differentiation, in morphogenesis control.</text>
</comment>
<comment type="cofactor">
    <cofactor evidence="1">
        <name>Mg(2+)</name>
        <dbReference type="ChEBI" id="CHEBI:18420"/>
    </cofactor>
</comment>
<comment type="subunit">
    <text evidence="1">Monomer.</text>
</comment>
<comment type="subcellular location">
    <subcellularLocation>
        <location evidence="1">Cytoplasm</location>
    </subcellularLocation>
</comment>
<comment type="similarity">
    <text evidence="1">Belongs to the TRAFAC class OBG-HflX-like GTPase superfamily. OBG GTPase family.</text>
</comment>
<organism>
    <name type="scientific">Yersinia pestis (strain Pestoides F)</name>
    <dbReference type="NCBI Taxonomy" id="386656"/>
    <lineage>
        <taxon>Bacteria</taxon>
        <taxon>Pseudomonadati</taxon>
        <taxon>Pseudomonadota</taxon>
        <taxon>Gammaproteobacteria</taxon>
        <taxon>Enterobacterales</taxon>
        <taxon>Yersiniaceae</taxon>
        <taxon>Yersinia</taxon>
    </lineage>
</organism>
<proteinExistence type="inferred from homology"/>
<reference key="1">
    <citation type="submission" date="2007-02" db="EMBL/GenBank/DDBJ databases">
        <title>Complete sequence of chromosome of Yersinia pestis Pestoides F.</title>
        <authorList>
            <consortium name="US DOE Joint Genome Institute"/>
            <person name="Copeland A."/>
            <person name="Lucas S."/>
            <person name="Lapidus A."/>
            <person name="Barry K."/>
            <person name="Detter J.C."/>
            <person name="Glavina del Rio T."/>
            <person name="Hammon N."/>
            <person name="Israni S."/>
            <person name="Dalin E."/>
            <person name="Tice H."/>
            <person name="Pitluck S."/>
            <person name="Di Bartolo G."/>
            <person name="Chain P."/>
            <person name="Malfatti S."/>
            <person name="Shin M."/>
            <person name="Vergez L."/>
            <person name="Schmutz J."/>
            <person name="Larimer F."/>
            <person name="Land M."/>
            <person name="Hauser L."/>
            <person name="Worsham P."/>
            <person name="Chu M."/>
            <person name="Bearden S."/>
            <person name="Garcia E."/>
            <person name="Richardson P."/>
        </authorList>
    </citation>
    <scope>NUCLEOTIDE SEQUENCE [LARGE SCALE GENOMIC DNA]</scope>
    <source>
        <strain>Pestoides F</strain>
    </source>
</reference>
<gene>
    <name evidence="1" type="primary">obg</name>
    <name type="ordered locus">YPDSF_3558</name>
</gene>
<keyword id="KW-0963">Cytoplasm</keyword>
<keyword id="KW-0342">GTP-binding</keyword>
<keyword id="KW-0378">Hydrolase</keyword>
<keyword id="KW-0460">Magnesium</keyword>
<keyword id="KW-0479">Metal-binding</keyword>
<keyword id="KW-0547">Nucleotide-binding</keyword>
<feature type="chain" id="PRO_0000386407" description="GTPase Obg">
    <location>
        <begin position="1"/>
        <end position="390"/>
    </location>
</feature>
<feature type="domain" description="Obg" evidence="2">
    <location>
        <begin position="1"/>
        <end position="159"/>
    </location>
</feature>
<feature type="domain" description="OBG-type G" evidence="1">
    <location>
        <begin position="160"/>
        <end position="333"/>
    </location>
</feature>
<feature type="region of interest" description="Disordered" evidence="3">
    <location>
        <begin position="364"/>
        <end position="390"/>
    </location>
</feature>
<feature type="compositionally biased region" description="Acidic residues" evidence="3">
    <location>
        <begin position="364"/>
        <end position="384"/>
    </location>
</feature>
<feature type="binding site" evidence="1">
    <location>
        <begin position="166"/>
        <end position="173"/>
    </location>
    <ligand>
        <name>GTP</name>
        <dbReference type="ChEBI" id="CHEBI:37565"/>
    </ligand>
</feature>
<feature type="binding site" evidence="1">
    <location>
        <position position="173"/>
    </location>
    <ligand>
        <name>Mg(2+)</name>
        <dbReference type="ChEBI" id="CHEBI:18420"/>
    </ligand>
</feature>
<feature type="binding site" evidence="1">
    <location>
        <begin position="191"/>
        <end position="195"/>
    </location>
    <ligand>
        <name>GTP</name>
        <dbReference type="ChEBI" id="CHEBI:37565"/>
    </ligand>
</feature>
<feature type="binding site" evidence="1">
    <location>
        <position position="193"/>
    </location>
    <ligand>
        <name>Mg(2+)</name>
        <dbReference type="ChEBI" id="CHEBI:18420"/>
    </ligand>
</feature>
<feature type="binding site" evidence="1">
    <location>
        <begin position="213"/>
        <end position="216"/>
    </location>
    <ligand>
        <name>GTP</name>
        <dbReference type="ChEBI" id="CHEBI:37565"/>
    </ligand>
</feature>
<feature type="binding site" evidence="1">
    <location>
        <begin position="283"/>
        <end position="286"/>
    </location>
    <ligand>
        <name>GTP</name>
        <dbReference type="ChEBI" id="CHEBI:37565"/>
    </ligand>
</feature>
<feature type="binding site" evidence="1">
    <location>
        <begin position="314"/>
        <end position="316"/>
    </location>
    <ligand>
        <name>GTP</name>
        <dbReference type="ChEBI" id="CHEBI:37565"/>
    </ligand>
</feature>